<reference key="1">
    <citation type="journal article" date="1995" name="Science">
        <title>Whole-genome random sequencing and assembly of Haemophilus influenzae Rd.</title>
        <authorList>
            <person name="Fleischmann R.D."/>
            <person name="Adams M.D."/>
            <person name="White O."/>
            <person name="Clayton R.A."/>
            <person name="Kirkness E.F."/>
            <person name="Kerlavage A.R."/>
            <person name="Bult C.J."/>
            <person name="Tomb J.-F."/>
            <person name="Dougherty B.A."/>
            <person name="Merrick J.M."/>
            <person name="McKenney K."/>
            <person name="Sutton G.G."/>
            <person name="FitzHugh W."/>
            <person name="Fields C.A."/>
            <person name="Gocayne J.D."/>
            <person name="Scott J.D."/>
            <person name="Shirley R."/>
            <person name="Liu L.-I."/>
            <person name="Glodek A."/>
            <person name="Kelley J.M."/>
            <person name="Weidman J.F."/>
            <person name="Phillips C.A."/>
            <person name="Spriggs T."/>
            <person name="Hedblom E."/>
            <person name="Cotton M.D."/>
            <person name="Utterback T.R."/>
            <person name="Hanna M.C."/>
            <person name="Nguyen D.T."/>
            <person name="Saudek D.M."/>
            <person name="Brandon R.C."/>
            <person name="Fine L.D."/>
            <person name="Fritchman J.L."/>
            <person name="Fuhrmann J.L."/>
            <person name="Geoghagen N.S.M."/>
            <person name="Gnehm C.L."/>
            <person name="McDonald L.A."/>
            <person name="Small K.V."/>
            <person name="Fraser C.M."/>
            <person name="Smith H.O."/>
            <person name="Venter J.C."/>
        </authorList>
    </citation>
    <scope>NUCLEOTIDE SEQUENCE [LARGE SCALE GENOMIC DNA]</scope>
    <source>
        <strain>ATCC 51907 / DSM 11121 / KW20 / Rd</strain>
    </source>
</reference>
<protein>
    <recommendedName>
        <fullName>Surface lipoprotein assembly modifier 2</fullName>
        <shortName>Slam</shortName>
    </recommendedName>
</protein>
<proteinExistence type="inferred from homology"/>
<gene>
    <name type="ordered locus">HI_0996</name>
    <name type="ordered locus">HI_0997</name>
</gene>
<evidence type="ECO:0000250" key="1">
    <source>
        <dbReference type="UniProtKB" id="Q4QLR4"/>
    </source>
</evidence>
<evidence type="ECO:0000250" key="2">
    <source>
        <dbReference type="UniProtKB" id="Q9K165"/>
    </source>
</evidence>
<evidence type="ECO:0000255" key="3"/>
<evidence type="ECO:0000305" key="4"/>
<name>SLAM2_HAEIN</name>
<keyword id="KW-0998">Cell outer membrane</keyword>
<keyword id="KW-0472">Membrane</keyword>
<keyword id="KW-1185">Reference proteome</keyword>
<keyword id="KW-0732">Signal</keyword>
<keyword id="KW-0812">Transmembrane</keyword>
<keyword id="KW-1134">Transmembrane beta strand</keyword>
<organism>
    <name type="scientific">Haemophilus influenzae (strain ATCC 51907 / DSM 11121 / KW20 / Rd)</name>
    <dbReference type="NCBI Taxonomy" id="71421"/>
    <lineage>
        <taxon>Bacteria</taxon>
        <taxon>Pseudomonadati</taxon>
        <taxon>Pseudomonadota</taxon>
        <taxon>Gammaproteobacteria</taxon>
        <taxon>Pasteurellales</taxon>
        <taxon>Pasteurellaceae</taxon>
        <taxon>Haemophilus</taxon>
    </lineage>
</organism>
<sequence length="481" mass="56139">MKNGVKQLFLLSLIGLSLTNVAWAEVARPKNDTLTNTIQSAELKTSSFSSMPKKEIPNRHIISLSKSQLAHHPRLVLRGLIPALYQNNTQAVQLLLPLYKQFPQQDNFLLTWAKAIEAREQGDLTQSIAYYRELFARDASLLPLRYQLAQALFFNYENEAAKIQFEKLRTEVDDEKFLGVIDQYLLTLNQRNQWIWQVGLNFLNDDNLNNAPKSGTKIGSWTAWEKESGQGVGYSLSVEKKWPWADHFFSKTMFNGNGKYYWDNKKYNEATVRIGGGLGYQTASVEVSLFPFQEKRWYAGGSSGTNTMKQYADKLGIRLENVDWLSKTWQISTALEYGESRYKIRKHLDGNYYFVSSTLFYLPKSTQFWFVGMDFHRENTQALDNAYQQKTLRLGWGQDWFYGISSRLTFSYANRVYREKDLIGIQQKNREYTTTITLWHRNIHFMGLTPKLSWDYQKSTSNHAFYRYDKNRIYLEIGKIF</sequence>
<comment type="function">
    <text evidence="1">Required for correct export to the cell surface of some cell outer membrane lipoproteins.</text>
</comment>
<comment type="subcellular location">
    <subcellularLocation>
        <location evidence="1">Cell outer membrane</location>
        <topology evidence="3">Multi-pass membrane protein</topology>
    </subcellularLocation>
</comment>
<comment type="domain">
    <text evidence="2">Consists of a soluble N-terminal domain and C-terminal probable beta-barrel in the outer membrane with 14 predicted beta-strands.</text>
</comment>
<comment type="similarity">
    <text evidence="4">Belongs to the Slam family.</text>
</comment>
<comment type="sequence caution" evidence="4">
    <conflict type="erroneous termination">
        <sequence resource="EMBL-CDS" id="AAC22658"/>
    </conflict>
    <text>Truncated C-terminus.</text>
</comment>
<comment type="sequence caution" evidence="4">
    <conflict type="erroneous initiation">
        <sequence resource="EMBL-CDS" id="AAC22659"/>
    </conflict>
    <text>Extended N-terminus.</text>
</comment>
<dbReference type="EMBL" id="L42023">
    <property type="protein sequence ID" value="AAC22658.1"/>
    <property type="status" value="ALT_SEQ"/>
    <property type="molecule type" value="Genomic_DNA"/>
</dbReference>
<dbReference type="EMBL" id="L42023">
    <property type="protein sequence ID" value="AAC22659.1"/>
    <property type="status" value="ALT_INIT"/>
    <property type="molecule type" value="Genomic_DNA"/>
</dbReference>
<dbReference type="PIR" id="H64017">
    <property type="entry name" value="H64017"/>
</dbReference>
<dbReference type="SMR" id="P44089"/>
<dbReference type="STRING" id="71421.HI_0996"/>
<dbReference type="EnsemblBacteria" id="AAC22658">
    <property type="protein sequence ID" value="AAC22658"/>
    <property type="gene ID" value="HI_0996"/>
</dbReference>
<dbReference type="EnsemblBacteria" id="AAC22659">
    <property type="protein sequence ID" value="AAC22659"/>
    <property type="gene ID" value="HI_0997"/>
</dbReference>
<dbReference type="KEGG" id="hin:HI_0996"/>
<dbReference type="KEGG" id="hin:HI_0997"/>
<dbReference type="eggNOG" id="COG4783">
    <property type="taxonomic scope" value="Bacteria"/>
</dbReference>
<dbReference type="HOGENOM" id="CLU_1774801_0_0_6"/>
<dbReference type="Proteomes" id="UP000000579">
    <property type="component" value="Chromosome"/>
</dbReference>
<dbReference type="GO" id="GO:0009279">
    <property type="term" value="C:cell outer membrane"/>
    <property type="evidence" value="ECO:0007669"/>
    <property type="project" value="UniProtKB-SubCell"/>
</dbReference>
<dbReference type="InterPro" id="IPR007655">
    <property type="entry name" value="Slam_C_b-barrel"/>
</dbReference>
<dbReference type="Pfam" id="PF04575">
    <property type="entry name" value="SlipAM"/>
    <property type="match status" value="1"/>
</dbReference>
<dbReference type="Pfam" id="PF24575">
    <property type="entry name" value="TPR_Slam"/>
    <property type="match status" value="1"/>
</dbReference>
<feature type="signal peptide" evidence="3">
    <location>
        <begin position="1"/>
        <end position="24"/>
    </location>
</feature>
<feature type="chain" id="PRO_0000077989" description="Surface lipoprotein assembly modifier 2">
    <location>
        <begin position="25"/>
        <end position="481"/>
    </location>
</feature>
<feature type="transmembrane region" description="Beta stranded" evidence="3">
    <location>
        <begin position="194"/>
        <end position="204"/>
    </location>
</feature>
<feature type="transmembrane region" description="Beta stranded" evidence="3">
    <location>
        <begin position="223"/>
        <end position="243"/>
    </location>
</feature>
<feature type="transmembrane region" description="Beta stranded" evidence="3">
    <location>
        <begin position="248"/>
        <end position="257"/>
    </location>
</feature>
<feature type="transmembrane region" description="Beta stranded" evidence="3">
    <location>
        <begin position="271"/>
        <end position="281"/>
    </location>
</feature>
<feature type="transmembrane region" description="Beta stranded" evidence="3">
    <location>
        <begin position="285"/>
        <end position="295"/>
    </location>
</feature>
<feature type="transmembrane region" description="Beta stranded" evidence="3">
    <location>
        <begin position="315"/>
        <end position="325"/>
    </location>
</feature>
<feature type="transmembrane region" description="Beta stranded" evidence="3">
    <location>
        <begin position="329"/>
        <end position="339"/>
    </location>
</feature>
<feature type="transmembrane region" description="Beta stranded" evidence="3">
    <location>
        <begin position="353"/>
        <end position="363"/>
    </location>
</feature>
<feature type="transmembrane region" description="Beta stranded" evidence="3">
    <location>
        <begin position="368"/>
        <end position="377"/>
    </location>
</feature>
<feature type="transmembrane region" description="Beta stranded" evidence="3">
    <location>
        <begin position="390"/>
        <end position="399"/>
    </location>
</feature>
<feature type="transmembrane region" description="Beta stranded" evidence="3">
    <location>
        <begin position="404"/>
        <end position="414"/>
    </location>
</feature>
<feature type="transmembrane region" description="Beta stranded" evidence="3">
    <location>
        <begin position="432"/>
        <end position="441"/>
    </location>
</feature>
<feature type="transmembrane region" description="Beta stranded" evidence="3">
    <location>
        <begin position="448"/>
        <end position="458"/>
    </location>
</feature>
<feature type="transmembrane region" description="Beta stranded" evidence="3">
    <location>
        <begin position="471"/>
        <end position="481"/>
    </location>
</feature>
<feature type="region of interest" description="N-terminal domain" evidence="2">
    <location>
        <begin position="24"/>
        <end position="192"/>
    </location>
</feature>
<feature type="region of interest" description="C-terminal probable beta barrel" evidence="2">
    <location>
        <begin position="193"/>
        <end position="481"/>
    </location>
</feature>
<accession>P44089</accession>
<accession>P44090</accession>